<accession>P0DO97</accession>
<protein>
    <recommendedName>
        <fullName evidence="3">Coiled-coil domain-containing protein 192</fullName>
    </recommendedName>
</protein>
<name>CC192_HUMAN</name>
<keyword id="KW-0175">Coiled coil</keyword>
<keyword id="KW-1267">Proteomics identification</keyword>
<keyword id="KW-1185">Reference proteome</keyword>
<proteinExistence type="evidence at protein level"/>
<gene>
    <name evidence="4" type="primary">CCDC192</name>
    <name type="synonym">LINC01183</name>
</gene>
<organism>
    <name type="scientific">Homo sapiens</name>
    <name type="common">Human</name>
    <dbReference type="NCBI Taxonomy" id="9606"/>
    <lineage>
        <taxon>Eukaryota</taxon>
        <taxon>Metazoa</taxon>
        <taxon>Chordata</taxon>
        <taxon>Craniata</taxon>
        <taxon>Vertebrata</taxon>
        <taxon>Euteleostomi</taxon>
        <taxon>Mammalia</taxon>
        <taxon>Eutheria</taxon>
        <taxon>Euarchontoglires</taxon>
        <taxon>Primates</taxon>
        <taxon>Haplorrhini</taxon>
        <taxon>Catarrhini</taxon>
        <taxon>Hominidae</taxon>
        <taxon>Homo</taxon>
    </lineage>
</organism>
<evidence type="ECO:0000255" key="1"/>
<evidence type="ECO:0000256" key="2">
    <source>
        <dbReference type="SAM" id="MobiDB-lite"/>
    </source>
</evidence>
<evidence type="ECO:0000305" key="3"/>
<evidence type="ECO:0000312" key="4">
    <source>
        <dbReference type="HGNC" id="HGNC:49566"/>
    </source>
</evidence>
<sequence length="292" mass="32479">MMPVDVCPRDRGSQWVWLEMGQCYSKKSVVPESDTSERSSMTSGSSESDIPQENKVSKASLDTGQMAFTLAQLESLEICLKEAEEKAKALSEQLSVSEGTKSKLLEQVSRLEEKLEAVDHKEASGGPYEKMVLVKDQCIQKLQAEVKASQEQLIAQKLKHEKKVKKLQTDLATANAITVLELNEKIKTLYEGKPAPREDSLLEGFCGGLPPVEEGDRKISLIMELSTQVSLQTERITQLKEVLEEKERKIQQLEAERSPHPPQEVKDPPGCLPEAPVFSTHDIPPVVSDENL</sequence>
<dbReference type="EMBL" id="AC022118">
    <property type="status" value="NOT_ANNOTATED_CDS"/>
    <property type="molecule type" value="Genomic_DNA"/>
</dbReference>
<dbReference type="EMBL" id="AC068658">
    <property type="status" value="NOT_ANNOTATED_CDS"/>
    <property type="molecule type" value="Genomic_DNA"/>
</dbReference>
<dbReference type="EMBL" id="AC113409">
    <property type="status" value="NOT_ANNOTATED_CDS"/>
    <property type="molecule type" value="Genomic_DNA"/>
</dbReference>
<dbReference type="RefSeq" id="NP_001304867.1">
    <property type="nucleotide sequence ID" value="NM_001317938.1"/>
</dbReference>
<dbReference type="SMR" id="P0DO97"/>
<dbReference type="FunCoup" id="P0DO97">
    <property type="interactions" value="1"/>
</dbReference>
<dbReference type="STRING" id="9606.ENSP00000490579"/>
<dbReference type="GlyGen" id="P0DO97">
    <property type="glycosylation" value="2 sites, 1 O-linked glycan (2 sites)"/>
</dbReference>
<dbReference type="BioMuta" id="CCDC192"/>
<dbReference type="jPOST" id="P0DO97"/>
<dbReference type="MassIVE" id="P0DO97"/>
<dbReference type="PeptideAtlas" id="P0DO97"/>
<dbReference type="DNASU" id="728586"/>
<dbReference type="Ensembl" id="ENST00000706942.1">
    <property type="protein sequence ID" value="ENSP00000516662.1"/>
    <property type="gene ID" value="ENSG00000230561.7"/>
</dbReference>
<dbReference type="GeneID" id="728586"/>
<dbReference type="KEGG" id="hsa:728586"/>
<dbReference type="AGR" id="HGNC:49566"/>
<dbReference type="CTD" id="728586"/>
<dbReference type="DisGeNET" id="728586"/>
<dbReference type="GeneCards" id="CCDC192"/>
<dbReference type="HGNC" id="HGNC:49566">
    <property type="gene designation" value="CCDC192"/>
</dbReference>
<dbReference type="HPA" id="ENSG00000230561">
    <property type="expression patterns" value="Tissue enriched (testis)"/>
</dbReference>
<dbReference type="neXtProt" id="NX_P0DO97"/>
<dbReference type="OpenTargets" id="ENSG00000230561"/>
<dbReference type="VEuPathDB" id="HostDB:ENSG00000230561"/>
<dbReference type="GeneTree" id="ENSGT00520000057704"/>
<dbReference type="InParanoid" id="P0DO97"/>
<dbReference type="OMA" id="EMGECYS"/>
<dbReference type="OrthoDB" id="6111632at2759"/>
<dbReference type="PAN-GO" id="P0DO97">
    <property type="GO annotations" value="0 GO annotations based on evolutionary models"/>
</dbReference>
<dbReference type="PathwayCommons" id="P0DO97"/>
<dbReference type="SignaLink" id="P0DO97"/>
<dbReference type="BioGRID-ORCS" id="728586">
    <property type="hits" value="0 hits in 7 CRISPR screens"/>
</dbReference>
<dbReference type="ChiTaRS" id="CCDC192">
    <property type="organism name" value="human"/>
</dbReference>
<dbReference type="GenomeRNAi" id="728586"/>
<dbReference type="Pharos" id="P0DO97">
    <property type="development level" value="Tdark"/>
</dbReference>
<dbReference type="PRO" id="PR:P0DO97"/>
<dbReference type="Proteomes" id="UP000005640">
    <property type="component" value="Chromosome 5"/>
</dbReference>
<dbReference type="RNAct" id="P0DO97">
    <property type="molecule type" value="protein"/>
</dbReference>
<dbReference type="Bgee" id="ENSG00000230561">
    <property type="expression patterns" value="Expressed in primordial germ cell in gonad and 97 other cell types or tissues"/>
</dbReference>
<dbReference type="InterPro" id="IPR038817">
    <property type="entry name" value="CCDC192"/>
</dbReference>
<dbReference type="PANTHER" id="PTHR38580">
    <property type="entry name" value="COILED-COIL DOMAIN-CONTAINING PROTEIN 192"/>
    <property type="match status" value="1"/>
</dbReference>
<dbReference type="PANTHER" id="PTHR38580:SF1">
    <property type="entry name" value="COILED-COIL DOMAIN-CONTAINING PROTEIN 192"/>
    <property type="match status" value="1"/>
</dbReference>
<feature type="chain" id="PRO_0000436441" description="Coiled-coil domain-containing protein 192">
    <location>
        <begin position="1"/>
        <end position="292"/>
    </location>
</feature>
<feature type="region of interest" description="Disordered" evidence="2">
    <location>
        <begin position="28"/>
        <end position="55"/>
    </location>
</feature>
<feature type="region of interest" description="Disordered" evidence="2">
    <location>
        <begin position="251"/>
        <end position="292"/>
    </location>
</feature>
<feature type="coiled-coil region" evidence="1">
    <location>
        <begin position="65"/>
        <end position="174"/>
    </location>
</feature>
<feature type="coiled-coil region" evidence="1">
    <location>
        <begin position="222"/>
        <end position="258"/>
    </location>
</feature>
<feature type="compositionally biased region" description="Low complexity" evidence="2">
    <location>
        <begin position="38"/>
        <end position="49"/>
    </location>
</feature>
<feature type="compositionally biased region" description="Basic and acidic residues" evidence="2">
    <location>
        <begin position="251"/>
        <end position="267"/>
    </location>
</feature>
<reference key="1">
    <citation type="journal article" date="2004" name="Nature">
        <title>The DNA sequence and comparative analysis of human chromosome 5.</title>
        <authorList>
            <person name="Schmutz J."/>
            <person name="Martin J."/>
            <person name="Terry A."/>
            <person name="Couronne O."/>
            <person name="Grimwood J."/>
            <person name="Lowry S."/>
            <person name="Gordon L.A."/>
            <person name="Scott D."/>
            <person name="Xie G."/>
            <person name="Huang W."/>
            <person name="Hellsten U."/>
            <person name="Tran-Gyamfi M."/>
            <person name="She X."/>
            <person name="Prabhakar S."/>
            <person name="Aerts A."/>
            <person name="Altherr M."/>
            <person name="Bajorek E."/>
            <person name="Black S."/>
            <person name="Branscomb E."/>
            <person name="Caoile C."/>
            <person name="Challacombe J.F."/>
            <person name="Chan Y.M."/>
            <person name="Denys M."/>
            <person name="Detter J.C."/>
            <person name="Escobar J."/>
            <person name="Flowers D."/>
            <person name="Fotopulos D."/>
            <person name="Glavina T."/>
            <person name="Gomez M."/>
            <person name="Gonzales E."/>
            <person name="Goodstein D."/>
            <person name="Grigoriev I."/>
            <person name="Groza M."/>
            <person name="Hammon N."/>
            <person name="Hawkins T."/>
            <person name="Haydu L."/>
            <person name="Israni S."/>
            <person name="Jett J."/>
            <person name="Kadner K."/>
            <person name="Kimball H."/>
            <person name="Kobayashi A."/>
            <person name="Lopez F."/>
            <person name="Lou Y."/>
            <person name="Martinez D."/>
            <person name="Medina C."/>
            <person name="Morgan J."/>
            <person name="Nandkeshwar R."/>
            <person name="Noonan J.P."/>
            <person name="Pitluck S."/>
            <person name="Pollard M."/>
            <person name="Predki P."/>
            <person name="Priest J."/>
            <person name="Ramirez L."/>
            <person name="Retterer J."/>
            <person name="Rodriguez A."/>
            <person name="Rogers S."/>
            <person name="Salamov A."/>
            <person name="Salazar A."/>
            <person name="Thayer N."/>
            <person name="Tice H."/>
            <person name="Tsai M."/>
            <person name="Ustaszewska A."/>
            <person name="Vo N."/>
            <person name="Wheeler J."/>
            <person name="Wu K."/>
            <person name="Yang J."/>
            <person name="Dickson M."/>
            <person name="Cheng J.-F."/>
            <person name="Eichler E.E."/>
            <person name="Olsen A."/>
            <person name="Pennacchio L.A."/>
            <person name="Rokhsar D.S."/>
            <person name="Richardson P."/>
            <person name="Lucas S.M."/>
            <person name="Myers R.M."/>
            <person name="Rubin E.M."/>
        </authorList>
    </citation>
    <scope>NUCLEOTIDE SEQUENCE [LARGE SCALE GENOMIC DNA]</scope>
</reference>